<organism>
    <name type="scientific">Chlamydia pneumoniae</name>
    <name type="common">Chlamydophila pneumoniae</name>
    <dbReference type="NCBI Taxonomy" id="83558"/>
    <lineage>
        <taxon>Bacteria</taxon>
        <taxon>Pseudomonadati</taxon>
        <taxon>Chlamydiota</taxon>
        <taxon>Chlamydiia</taxon>
        <taxon>Chlamydiales</taxon>
        <taxon>Chlamydiaceae</taxon>
        <taxon>Chlamydia/Chlamydophila group</taxon>
        <taxon>Chlamydia</taxon>
    </lineage>
</organism>
<feature type="chain" id="PRO_0000119239" description="V-type ATP synthase subunit I">
    <location>
        <begin position="1"/>
        <end position="660"/>
    </location>
</feature>
<feature type="transmembrane region" description="Helical" evidence="1">
    <location>
        <begin position="312"/>
        <end position="332"/>
    </location>
</feature>
<feature type="transmembrane region" description="Helical" evidence="1">
    <location>
        <begin position="362"/>
        <end position="382"/>
    </location>
</feature>
<feature type="transmembrane region" description="Helical" evidence="1">
    <location>
        <begin position="453"/>
        <end position="473"/>
    </location>
</feature>
<feature type="transmembrane region" description="Helical" evidence="1">
    <location>
        <begin position="485"/>
        <end position="505"/>
    </location>
</feature>
<feature type="transmembrane region" description="Helical" evidence="1">
    <location>
        <begin position="520"/>
        <end position="540"/>
    </location>
</feature>
<feature type="transmembrane region" description="Helical" evidence="1">
    <location>
        <begin position="560"/>
        <end position="580"/>
    </location>
</feature>
<feature type="transmembrane region" description="Helical" evidence="1">
    <location>
        <begin position="593"/>
        <end position="613"/>
    </location>
</feature>
<feature type="sequence conflict" description="In Ref. 3; BAA98301." evidence="2" ref="3">
    <original>M</original>
    <variation>V</variation>
    <location>
        <position position="288"/>
    </location>
</feature>
<evidence type="ECO:0000255" key="1"/>
<evidence type="ECO:0000305" key="2"/>
<keyword id="KW-1003">Cell membrane</keyword>
<keyword id="KW-0375">Hydrogen ion transport</keyword>
<keyword id="KW-0406">Ion transport</keyword>
<keyword id="KW-0472">Membrane</keyword>
<keyword id="KW-0812">Transmembrane</keyword>
<keyword id="KW-1133">Transmembrane helix</keyword>
<keyword id="KW-0813">Transport</keyword>
<dbReference type="EMBL" id="AE001363">
    <property type="protein sequence ID" value="AAD18244.1"/>
    <property type="molecule type" value="Genomic_DNA"/>
</dbReference>
<dbReference type="EMBL" id="AE002161">
    <property type="protein sequence ID" value="AAF38493.1"/>
    <property type="molecule type" value="Genomic_DNA"/>
</dbReference>
<dbReference type="EMBL" id="BA000008">
    <property type="protein sequence ID" value="BAA98301.1"/>
    <property type="molecule type" value="Genomic_DNA"/>
</dbReference>
<dbReference type="EMBL" id="AE009440">
    <property type="protein sequence ID" value="AAP98024.1"/>
    <property type="molecule type" value="Genomic_DNA"/>
</dbReference>
<dbReference type="PIR" id="C86502">
    <property type="entry name" value="C86502"/>
</dbReference>
<dbReference type="PIR" id="E72121">
    <property type="entry name" value="E72121"/>
</dbReference>
<dbReference type="PIR" id="E81549">
    <property type="entry name" value="E81549"/>
</dbReference>
<dbReference type="RefSeq" id="NP_224299.1">
    <property type="nucleotide sequence ID" value="NC_000922.1"/>
</dbReference>
<dbReference type="RefSeq" id="WP_010882741.1">
    <property type="nucleotide sequence ID" value="NZ_LN847257.1"/>
</dbReference>
<dbReference type="RefSeq" id="WP_010895279.1">
    <property type="nucleotide sequence ID" value="NZ_LN846995.1"/>
</dbReference>
<dbReference type="SMR" id="Q9Z990"/>
<dbReference type="STRING" id="406984.CPK_ORF00601"/>
<dbReference type="GeneID" id="45050136"/>
<dbReference type="KEGG" id="cpa:CP_0683"/>
<dbReference type="KEGG" id="cpj:atpI"/>
<dbReference type="KEGG" id="cpn:CPn_0091"/>
<dbReference type="KEGG" id="cpt:CpB0091"/>
<dbReference type="PATRIC" id="fig|115713.3.peg.104"/>
<dbReference type="eggNOG" id="COG1269">
    <property type="taxonomic scope" value="Bacteria"/>
</dbReference>
<dbReference type="HOGENOM" id="CLU_025558_1_1_0"/>
<dbReference type="OrthoDB" id="9803814at2"/>
<dbReference type="Proteomes" id="UP000000583">
    <property type="component" value="Chromosome"/>
</dbReference>
<dbReference type="Proteomes" id="UP000000801">
    <property type="component" value="Chromosome"/>
</dbReference>
<dbReference type="GO" id="GO:0005886">
    <property type="term" value="C:plasma membrane"/>
    <property type="evidence" value="ECO:0007669"/>
    <property type="project" value="UniProtKB-SubCell"/>
</dbReference>
<dbReference type="GO" id="GO:0033179">
    <property type="term" value="C:proton-transporting V-type ATPase, V0 domain"/>
    <property type="evidence" value="ECO:0007669"/>
    <property type="project" value="InterPro"/>
</dbReference>
<dbReference type="GO" id="GO:0016471">
    <property type="term" value="C:vacuolar proton-transporting V-type ATPase complex"/>
    <property type="evidence" value="ECO:0007669"/>
    <property type="project" value="TreeGrafter"/>
</dbReference>
<dbReference type="GO" id="GO:0051117">
    <property type="term" value="F:ATPase binding"/>
    <property type="evidence" value="ECO:0007669"/>
    <property type="project" value="TreeGrafter"/>
</dbReference>
<dbReference type="GO" id="GO:0046961">
    <property type="term" value="F:proton-transporting ATPase activity, rotational mechanism"/>
    <property type="evidence" value="ECO:0007669"/>
    <property type="project" value="InterPro"/>
</dbReference>
<dbReference type="GO" id="GO:0007035">
    <property type="term" value="P:vacuolar acidification"/>
    <property type="evidence" value="ECO:0007669"/>
    <property type="project" value="TreeGrafter"/>
</dbReference>
<dbReference type="InterPro" id="IPR002490">
    <property type="entry name" value="V-ATPase_116kDa_su"/>
</dbReference>
<dbReference type="NCBIfam" id="NF004431">
    <property type="entry name" value="PRK05771.2-5"/>
    <property type="match status" value="1"/>
</dbReference>
<dbReference type="PANTHER" id="PTHR11629:SF63">
    <property type="entry name" value="V-TYPE PROTON ATPASE SUBUNIT A"/>
    <property type="match status" value="1"/>
</dbReference>
<dbReference type="PANTHER" id="PTHR11629">
    <property type="entry name" value="VACUOLAR PROTON ATPASES"/>
    <property type="match status" value="1"/>
</dbReference>
<sequence length="660" mass="75608">MRLNIHKYLFIGRNKADFFSASRELGVVEFISKKCFITTEQGHRFVECLKVFDHLEAEYSLEALEFVKDESVSVEDIVSEVLTLNKEIKGLLETVKALRKEIVRVKPLGAFSSSEIAELSRKTGISLRFFYRTHKDNEDLEEDSPNVFYLSTAYNFDYYLVLGVVDLPRDRYTEIEAPRSVNELQVDLANLQREIRNRSDRLCDLYAYRREVLRGLCNYDNEQRLHQAKECCEDLFDGKVFAVAGWVIVDRIKELQSLCNRYQIYMERVPVDPDETIPTYLENKGVGMMGEDLVQIYDTPAYSDKDPSTWVFFAFVLFFSMIVNDAGYGLLFLMSSLLFSWKFRRKMKFSKHLSRMLKMTAILGLGCICWGTTTTSFFGMSFSKTSVFREYSMTHVLALKKAEYYLQMRPKAYKELTNEYPSLKAIRDPKAFLLATEIGSAGIESRYVVYDKFIDNILMELALFIGVVHLSLGMLRYLRYRYSGIGWILFMVSAYLYVPIYLGTVSLIHYLFHVPYELGGQIGYYGMFGGIGLAVVLAMIQRSWRGVEEIISVIQVFSDVLSYLRIYALGLAGAMMGATFNQMGARLPMLLGSIVILLGHSVNIILSIMGGVIHGLRLNFIEWYHYSFDGGGRPLRPLRKIVCSEDAEASGIHLDNNSIV</sequence>
<reference key="1">
    <citation type="journal article" date="1999" name="Nat. Genet.">
        <title>Comparative genomes of Chlamydia pneumoniae and C. trachomatis.</title>
        <authorList>
            <person name="Kalman S."/>
            <person name="Mitchell W.P."/>
            <person name="Marathe R."/>
            <person name="Lammel C.J."/>
            <person name="Fan J."/>
            <person name="Hyman R.W."/>
            <person name="Olinger L."/>
            <person name="Grimwood J."/>
            <person name="Davis R.W."/>
            <person name="Stephens R.S."/>
        </authorList>
    </citation>
    <scope>NUCLEOTIDE SEQUENCE [LARGE SCALE GENOMIC DNA]</scope>
    <source>
        <strain>CWL029</strain>
    </source>
</reference>
<reference key="2">
    <citation type="journal article" date="2000" name="Nucleic Acids Res.">
        <title>Genome sequences of Chlamydia trachomatis MoPn and Chlamydia pneumoniae AR39.</title>
        <authorList>
            <person name="Read T.D."/>
            <person name="Brunham R.C."/>
            <person name="Shen C."/>
            <person name="Gill S.R."/>
            <person name="Heidelberg J.F."/>
            <person name="White O."/>
            <person name="Hickey E.K."/>
            <person name="Peterson J.D."/>
            <person name="Utterback T.R."/>
            <person name="Berry K.J."/>
            <person name="Bass S."/>
            <person name="Linher K.D."/>
            <person name="Weidman J.F."/>
            <person name="Khouri H.M."/>
            <person name="Craven B."/>
            <person name="Bowman C."/>
            <person name="Dodson R.J."/>
            <person name="Gwinn M.L."/>
            <person name="Nelson W.C."/>
            <person name="DeBoy R.T."/>
            <person name="Kolonay J.F."/>
            <person name="McClarty G."/>
            <person name="Salzberg S.L."/>
            <person name="Eisen J.A."/>
            <person name="Fraser C.M."/>
        </authorList>
    </citation>
    <scope>NUCLEOTIDE SEQUENCE [LARGE SCALE GENOMIC DNA]</scope>
    <source>
        <strain>AR39</strain>
    </source>
</reference>
<reference key="3">
    <citation type="journal article" date="2000" name="Nucleic Acids Res.">
        <title>Comparison of whole genome sequences of Chlamydia pneumoniae J138 from Japan and CWL029 from USA.</title>
        <authorList>
            <person name="Shirai M."/>
            <person name="Hirakawa H."/>
            <person name="Kimoto M."/>
            <person name="Tabuchi M."/>
            <person name="Kishi F."/>
            <person name="Ouchi K."/>
            <person name="Shiba T."/>
            <person name="Ishii K."/>
            <person name="Hattori M."/>
            <person name="Kuhara S."/>
            <person name="Nakazawa T."/>
        </authorList>
    </citation>
    <scope>NUCLEOTIDE SEQUENCE [LARGE SCALE GENOMIC DNA]</scope>
    <source>
        <strain>J138</strain>
    </source>
</reference>
<reference key="4">
    <citation type="submission" date="2002-05" db="EMBL/GenBank/DDBJ databases">
        <title>The genome sequence of Chlamydia pneumoniae TW183 and comparison with other Chlamydia strains based on whole genome sequence analysis.</title>
        <authorList>
            <person name="Geng M.M."/>
            <person name="Schuhmacher A."/>
            <person name="Muehldorfer I."/>
            <person name="Bensch K.W."/>
            <person name="Schaefer K.P."/>
            <person name="Schneider S."/>
            <person name="Pohl T."/>
            <person name="Essig A."/>
            <person name="Marre R."/>
            <person name="Melchers K."/>
        </authorList>
    </citation>
    <scope>NUCLEOTIDE SEQUENCE [LARGE SCALE GENOMIC DNA]</scope>
    <source>
        <strain>TW-183</strain>
    </source>
</reference>
<name>VATI_CHLPN</name>
<comment type="function">
    <text>Produces ATP from ADP in the presence of a proton gradient across the membrane.</text>
</comment>
<comment type="subcellular location">
    <subcellularLocation>
        <location evidence="2">Cell membrane</location>
        <topology evidence="2">Multi-pass membrane protein</topology>
    </subcellularLocation>
</comment>
<comment type="similarity">
    <text evidence="2">Belongs to the V-ATPase 116 kDa subunit family.</text>
</comment>
<protein>
    <recommendedName>
        <fullName>V-type ATP synthase subunit I</fullName>
    </recommendedName>
    <alternativeName>
        <fullName>V-ATPase subunit I</fullName>
    </alternativeName>
</protein>
<accession>Q9Z990</accession>
<accession>Q9JSJ6</accession>
<accession>Q9K214</accession>
<gene>
    <name type="primary">atpI</name>
    <name type="synonym">ntpI</name>
    <name type="ordered locus">CPn_0091</name>
    <name type="ordered locus">CP_0683</name>
    <name type="ordered locus">CpB0091</name>
</gene>
<proteinExistence type="inferred from homology"/>